<gene>
    <name evidence="1" type="primary">proS</name>
    <name type="ordered locus">Daro_0644</name>
</gene>
<comment type="function">
    <text evidence="1">Catalyzes the attachment of proline to tRNA(Pro) in a two-step reaction: proline is first activated by ATP to form Pro-AMP and then transferred to the acceptor end of tRNA(Pro). As ProRS can inadvertently accommodate and process non-cognate amino acids such as alanine and cysteine, to avoid such errors it has two additional distinct editing activities against alanine. One activity is designated as 'pretransfer' editing and involves the tRNA(Pro)-independent hydrolysis of activated Ala-AMP. The other activity is designated 'posttransfer' editing and involves deacylation of mischarged Ala-tRNA(Pro). The misacylated Cys-tRNA(Pro) is not edited by ProRS.</text>
</comment>
<comment type="catalytic activity">
    <reaction evidence="1">
        <text>tRNA(Pro) + L-proline + ATP = L-prolyl-tRNA(Pro) + AMP + diphosphate</text>
        <dbReference type="Rhea" id="RHEA:14305"/>
        <dbReference type="Rhea" id="RHEA-COMP:9700"/>
        <dbReference type="Rhea" id="RHEA-COMP:9702"/>
        <dbReference type="ChEBI" id="CHEBI:30616"/>
        <dbReference type="ChEBI" id="CHEBI:33019"/>
        <dbReference type="ChEBI" id="CHEBI:60039"/>
        <dbReference type="ChEBI" id="CHEBI:78442"/>
        <dbReference type="ChEBI" id="CHEBI:78532"/>
        <dbReference type="ChEBI" id="CHEBI:456215"/>
        <dbReference type="EC" id="6.1.1.15"/>
    </reaction>
</comment>
<comment type="subunit">
    <text evidence="1">Homodimer.</text>
</comment>
<comment type="subcellular location">
    <subcellularLocation>
        <location evidence="1">Cytoplasm</location>
    </subcellularLocation>
</comment>
<comment type="domain">
    <text evidence="1">Consists of three domains: the N-terminal catalytic domain, the editing domain and the C-terminal anticodon-binding domain.</text>
</comment>
<comment type="similarity">
    <text evidence="1">Belongs to the class-II aminoacyl-tRNA synthetase family. ProS type 1 subfamily.</text>
</comment>
<proteinExistence type="inferred from homology"/>
<keyword id="KW-0030">Aminoacyl-tRNA synthetase</keyword>
<keyword id="KW-0067">ATP-binding</keyword>
<keyword id="KW-0963">Cytoplasm</keyword>
<keyword id="KW-0436">Ligase</keyword>
<keyword id="KW-0547">Nucleotide-binding</keyword>
<keyword id="KW-0648">Protein biosynthesis</keyword>
<sequence length="576" mass="63863">MRTSQFFFTTLKEAPADAEVISQKMMLRAGYIKRAAAGIYTWMPLGLRVLRKVENIVREEMNNAGALELLMPAVQPAELWQESGRWEQYGPELLRFKDRHQREFVIGPTHEEVITDVVRRDVKSYRQLPIHLYQIQTKFRDEIRPRFGVMRGREFLMKDGYSFHASFDDLKREYGNMYDTYSRIFSRLGLKFRAVAADTGSIGGTGSHEFHVLADSGEDDIAFCPDSGYAANVELAEAMAPNEARAAASTLMEKTHTPGKMACADVAKFLELPLDRIVKSIAVMSEKEDGSQTFALLLLRGDHELNEIKASKIAAINPFRFATEEEVIERLGCKPGFIGPVAIDATKVAVFADRSVANMSDFVCGANEAGYHMTGVNFGRDLPEPEVFDIRNVVAGDASPDGQGKLEILRGIEVGHIFQLRQKYAEALNCVYLDDSGKSQIMEMGCYGIGVSRIVGAAIEQGNDDKGIILPPAIAPFEVCIVPMGYHKSEAVKASADQLYADLKKIGVDVVLDDRNERPGVMFADMELIGIPHRVVIGERGLKDGLFEYKSRIDAEPTMVAQTDIVTLLQGKLCAA</sequence>
<feature type="chain" id="PRO_0000248681" description="Proline--tRNA ligase">
    <location>
        <begin position="1"/>
        <end position="576"/>
    </location>
</feature>
<evidence type="ECO:0000255" key="1">
    <source>
        <dbReference type="HAMAP-Rule" id="MF_01569"/>
    </source>
</evidence>
<accession>Q47ID0</accession>
<protein>
    <recommendedName>
        <fullName evidence="1">Proline--tRNA ligase</fullName>
        <ecNumber evidence="1">6.1.1.15</ecNumber>
    </recommendedName>
    <alternativeName>
        <fullName evidence="1">Prolyl-tRNA synthetase</fullName>
        <shortName evidence="1">ProRS</shortName>
    </alternativeName>
</protein>
<organism>
    <name type="scientific">Dechloromonas aromatica (strain RCB)</name>
    <dbReference type="NCBI Taxonomy" id="159087"/>
    <lineage>
        <taxon>Bacteria</taxon>
        <taxon>Pseudomonadati</taxon>
        <taxon>Pseudomonadota</taxon>
        <taxon>Betaproteobacteria</taxon>
        <taxon>Rhodocyclales</taxon>
        <taxon>Azonexaceae</taxon>
        <taxon>Dechloromonas</taxon>
    </lineage>
</organism>
<name>SYP_DECAR</name>
<reference key="1">
    <citation type="journal article" date="2009" name="BMC Genomics">
        <title>Metabolic analysis of the soil microbe Dechloromonas aromatica str. RCB: indications of a surprisingly complex life-style and cryptic anaerobic pathways for aromatic degradation.</title>
        <authorList>
            <person name="Salinero K.K."/>
            <person name="Keller K."/>
            <person name="Feil W.S."/>
            <person name="Feil H."/>
            <person name="Trong S."/>
            <person name="Di Bartolo G."/>
            <person name="Lapidus A."/>
        </authorList>
    </citation>
    <scope>NUCLEOTIDE SEQUENCE [LARGE SCALE GENOMIC DNA]</scope>
    <source>
        <strain>RCB</strain>
    </source>
</reference>
<dbReference type="EC" id="6.1.1.15" evidence="1"/>
<dbReference type="EMBL" id="CP000089">
    <property type="protein sequence ID" value="AAZ45401.1"/>
    <property type="molecule type" value="Genomic_DNA"/>
</dbReference>
<dbReference type="SMR" id="Q47ID0"/>
<dbReference type="STRING" id="159087.Daro_0644"/>
<dbReference type="KEGG" id="dar:Daro_0644"/>
<dbReference type="eggNOG" id="COG0442">
    <property type="taxonomic scope" value="Bacteria"/>
</dbReference>
<dbReference type="HOGENOM" id="CLU_016739_0_0_4"/>
<dbReference type="OrthoDB" id="9809052at2"/>
<dbReference type="GO" id="GO:0005829">
    <property type="term" value="C:cytosol"/>
    <property type="evidence" value="ECO:0007669"/>
    <property type="project" value="TreeGrafter"/>
</dbReference>
<dbReference type="GO" id="GO:0002161">
    <property type="term" value="F:aminoacyl-tRNA deacylase activity"/>
    <property type="evidence" value="ECO:0007669"/>
    <property type="project" value="InterPro"/>
</dbReference>
<dbReference type="GO" id="GO:0005524">
    <property type="term" value="F:ATP binding"/>
    <property type="evidence" value="ECO:0007669"/>
    <property type="project" value="UniProtKB-UniRule"/>
</dbReference>
<dbReference type="GO" id="GO:0004827">
    <property type="term" value="F:proline-tRNA ligase activity"/>
    <property type="evidence" value="ECO:0007669"/>
    <property type="project" value="UniProtKB-UniRule"/>
</dbReference>
<dbReference type="GO" id="GO:0006433">
    <property type="term" value="P:prolyl-tRNA aminoacylation"/>
    <property type="evidence" value="ECO:0007669"/>
    <property type="project" value="UniProtKB-UniRule"/>
</dbReference>
<dbReference type="CDD" id="cd04334">
    <property type="entry name" value="ProRS-INS"/>
    <property type="match status" value="1"/>
</dbReference>
<dbReference type="CDD" id="cd00861">
    <property type="entry name" value="ProRS_anticodon_short"/>
    <property type="match status" value="1"/>
</dbReference>
<dbReference type="CDD" id="cd00779">
    <property type="entry name" value="ProRS_core_prok"/>
    <property type="match status" value="1"/>
</dbReference>
<dbReference type="FunFam" id="3.30.930.10:FF:000043">
    <property type="entry name" value="Proline--tRNA ligase"/>
    <property type="match status" value="1"/>
</dbReference>
<dbReference type="FunFam" id="3.30.930.10:FF:000097">
    <property type="entry name" value="Proline--tRNA ligase"/>
    <property type="match status" value="1"/>
</dbReference>
<dbReference type="Gene3D" id="3.40.50.800">
    <property type="entry name" value="Anticodon-binding domain"/>
    <property type="match status" value="1"/>
</dbReference>
<dbReference type="Gene3D" id="3.30.930.10">
    <property type="entry name" value="Bira Bifunctional Protein, Domain 2"/>
    <property type="match status" value="2"/>
</dbReference>
<dbReference type="Gene3D" id="3.90.960.10">
    <property type="entry name" value="YbaK/aminoacyl-tRNA synthetase-associated domain"/>
    <property type="match status" value="1"/>
</dbReference>
<dbReference type="HAMAP" id="MF_01569">
    <property type="entry name" value="Pro_tRNA_synth_type1"/>
    <property type="match status" value="1"/>
</dbReference>
<dbReference type="InterPro" id="IPR002314">
    <property type="entry name" value="aa-tRNA-synt_IIb"/>
</dbReference>
<dbReference type="InterPro" id="IPR006195">
    <property type="entry name" value="aa-tRNA-synth_II"/>
</dbReference>
<dbReference type="InterPro" id="IPR045864">
    <property type="entry name" value="aa-tRNA-synth_II/BPL/LPL"/>
</dbReference>
<dbReference type="InterPro" id="IPR004154">
    <property type="entry name" value="Anticodon-bd"/>
</dbReference>
<dbReference type="InterPro" id="IPR036621">
    <property type="entry name" value="Anticodon-bd_dom_sf"/>
</dbReference>
<dbReference type="InterPro" id="IPR002316">
    <property type="entry name" value="Pro-tRNA-ligase_IIa"/>
</dbReference>
<dbReference type="InterPro" id="IPR004500">
    <property type="entry name" value="Pro-tRNA-synth_IIa_bac-type"/>
</dbReference>
<dbReference type="InterPro" id="IPR023717">
    <property type="entry name" value="Pro-tRNA-Synthase_IIa_type1"/>
</dbReference>
<dbReference type="InterPro" id="IPR050062">
    <property type="entry name" value="Pro-tRNA_synthetase"/>
</dbReference>
<dbReference type="InterPro" id="IPR044140">
    <property type="entry name" value="ProRS_anticodon_short"/>
</dbReference>
<dbReference type="InterPro" id="IPR033730">
    <property type="entry name" value="ProRS_core_prok"/>
</dbReference>
<dbReference type="InterPro" id="IPR036754">
    <property type="entry name" value="YbaK/aa-tRNA-synt-asso_dom_sf"/>
</dbReference>
<dbReference type="InterPro" id="IPR007214">
    <property type="entry name" value="YbaK/aa-tRNA-synth-assoc-dom"/>
</dbReference>
<dbReference type="NCBIfam" id="NF006625">
    <property type="entry name" value="PRK09194.1"/>
    <property type="match status" value="1"/>
</dbReference>
<dbReference type="NCBIfam" id="TIGR00409">
    <property type="entry name" value="proS_fam_II"/>
    <property type="match status" value="1"/>
</dbReference>
<dbReference type="PANTHER" id="PTHR42753">
    <property type="entry name" value="MITOCHONDRIAL RIBOSOME PROTEIN L39/PROLYL-TRNA LIGASE FAMILY MEMBER"/>
    <property type="match status" value="1"/>
</dbReference>
<dbReference type="PANTHER" id="PTHR42753:SF2">
    <property type="entry name" value="PROLINE--TRNA LIGASE"/>
    <property type="match status" value="1"/>
</dbReference>
<dbReference type="Pfam" id="PF03129">
    <property type="entry name" value="HGTP_anticodon"/>
    <property type="match status" value="1"/>
</dbReference>
<dbReference type="Pfam" id="PF00587">
    <property type="entry name" value="tRNA-synt_2b"/>
    <property type="match status" value="1"/>
</dbReference>
<dbReference type="Pfam" id="PF04073">
    <property type="entry name" value="tRNA_edit"/>
    <property type="match status" value="1"/>
</dbReference>
<dbReference type="PIRSF" id="PIRSF001535">
    <property type="entry name" value="ProRS_1"/>
    <property type="match status" value="1"/>
</dbReference>
<dbReference type="PRINTS" id="PR01046">
    <property type="entry name" value="TRNASYNTHPRO"/>
</dbReference>
<dbReference type="SUPFAM" id="SSF52954">
    <property type="entry name" value="Class II aaRS ABD-related"/>
    <property type="match status" value="1"/>
</dbReference>
<dbReference type="SUPFAM" id="SSF55681">
    <property type="entry name" value="Class II aaRS and biotin synthetases"/>
    <property type="match status" value="1"/>
</dbReference>
<dbReference type="SUPFAM" id="SSF55826">
    <property type="entry name" value="YbaK/ProRS associated domain"/>
    <property type="match status" value="1"/>
</dbReference>
<dbReference type="PROSITE" id="PS50862">
    <property type="entry name" value="AA_TRNA_LIGASE_II"/>
    <property type="match status" value="1"/>
</dbReference>